<organism>
    <name type="scientific">Lactococcus lactis subsp. lactis</name>
    <name type="common">Streptococcus lactis</name>
    <dbReference type="NCBI Taxonomy" id="1360"/>
    <lineage>
        <taxon>Bacteria</taxon>
        <taxon>Bacillati</taxon>
        <taxon>Bacillota</taxon>
        <taxon>Bacilli</taxon>
        <taxon>Lactobacillales</taxon>
        <taxon>Streptococcaceae</taxon>
        <taxon>Lactococcus</taxon>
    </lineage>
</organism>
<gene>
    <name type="primary">lcnDR2</name>
</gene>
<sequence>MKKKTYQFEKFLKNTFDQFSIKQNEVLVEDDLNDIIMNVCGKALVLMINEKREMNLLMGNTPEERYQYFENEYSSTGKAFEEIKDKFPVIYIDLKNSINSYLKLVSQIMKDFKKDYSLLVERKIIEEHSTISTMKIKGDLHNGKAVIEITTNKSKLIYKPKSLSNDVFFNNFLKYMDSFFIKEGKSTKYKENFYLVNTLDMKTYGWVEYVDKKPINSFEEARNYYRKIGVLLSVAYTLNLTDLHFENVISQGENPCIIDLETMFNMPMFVKDYKNESRNIINGKIMDSVVSTGMLPVLGIDSLFGGDPSGILGGTFSKEERVIINPFRDDIKFQKIVVRSVFKDHIPFFNNNNEKRYCKPKDYVNDIIKGFEKTYKIIVKNKEKILGFLKKESSSVTCRILFRNTMEYSVLLNAAKSPVYSNKREEIFEKLSTFNRGLGNDIIKSEISQINTLSIPYFNCQVDSNLIKNMDGETIFEHTLTPFKCFLSKYRRLCVDDMEQQVKLIRFSIQSQEQLFKDGEQFSLYKKQKGSQEDLLIAINELSSILENNAYIGTSDDTINWMSLGIADNDQILFESLENDIYKGISGIGLALLEYYEFYPNINTKKILKLIYKNISKDFINTNNEPQNYGFYVGLIGEYSFLRKYEKVFHKTSSCNILKNILKDFTPEKCQTILPSDDVIAGEAGIIIYISNLNNYLEYRDEIDILLKSLSNKIKLKESIASYAHGNSGIATAFVHGYKVTKNEKYLKIFHELWNLENSSKLRRGWTDSRKVDSSYSSQWCHGASGQAIARMEWITVNKTARFLSNSELIKVKKELGELIDILKKEGMYTDNFCLCHGILGNLLILNTYQENFDNKNINLKNEILNNYYSVCNYGLNKGWICGLGTEFYSYGLMTGISGILYGLIRQVKQKNNFGVLMPYVD</sequence>
<comment type="function">
    <text>Could be implicated in the processing or the export process of the lantibiotic lacticin 481/lactococcin DR.</text>
</comment>
<keyword id="KW-0045">Antibiotic biosynthesis</keyword>
<keyword id="KW-0871">Bacteriocin biosynthesis</keyword>
<protein>
    <recommendedName>
        <fullName>Lacticin 481/lactococcin biosynthesis protein LcnDR2</fullName>
    </recommendedName>
</protein>
<feature type="chain" id="PRO_0000084367" description="Lacticin 481/lactococcin biosynthesis protein LcnDR2">
    <location>
        <begin position="1"/>
        <end position="922"/>
    </location>
</feature>
<dbReference type="EMBL" id="U91581">
    <property type="protein sequence ID" value="AAC72258.1"/>
    <property type="molecule type" value="Genomic_DNA"/>
</dbReference>
<dbReference type="PIR" id="C47342">
    <property type="entry name" value="C47342"/>
</dbReference>
<dbReference type="SMR" id="P37609"/>
<dbReference type="GO" id="GO:0030152">
    <property type="term" value="P:bacteriocin biosynthetic process"/>
    <property type="evidence" value="ECO:0007669"/>
    <property type="project" value="UniProtKB-KW"/>
</dbReference>
<dbReference type="GO" id="GO:0031179">
    <property type="term" value="P:peptide modification"/>
    <property type="evidence" value="ECO:0007669"/>
    <property type="project" value="InterPro"/>
</dbReference>
<dbReference type="CDD" id="cd04792">
    <property type="entry name" value="LanM-like"/>
    <property type="match status" value="1"/>
</dbReference>
<dbReference type="Gene3D" id="1.50.10.20">
    <property type="match status" value="1"/>
</dbReference>
<dbReference type="InterPro" id="IPR007822">
    <property type="entry name" value="LANC-like"/>
</dbReference>
<dbReference type="InterPro" id="IPR025410">
    <property type="entry name" value="Lant_dehyd"/>
</dbReference>
<dbReference type="InterPro" id="IPR017146">
    <property type="entry name" value="Lanti_2_LanM"/>
</dbReference>
<dbReference type="NCBIfam" id="TIGR03897">
    <property type="entry name" value="lanti_2_LanM"/>
    <property type="match status" value="1"/>
</dbReference>
<dbReference type="Pfam" id="PF13575">
    <property type="entry name" value="DUF4135"/>
    <property type="match status" value="1"/>
</dbReference>
<dbReference type="Pfam" id="PF05147">
    <property type="entry name" value="LANC_like"/>
    <property type="match status" value="1"/>
</dbReference>
<dbReference type="PIRSF" id="PIRSF037228">
    <property type="entry name" value="Lant_mod_RumM"/>
    <property type="match status" value="1"/>
</dbReference>
<dbReference type="PRINTS" id="PR01950">
    <property type="entry name" value="LANCSUPER"/>
</dbReference>
<dbReference type="SMART" id="SM01260">
    <property type="entry name" value="LANC_like"/>
    <property type="match status" value="1"/>
</dbReference>
<dbReference type="SUPFAM" id="SSF158745">
    <property type="entry name" value="LanC-like"/>
    <property type="match status" value="1"/>
</dbReference>
<reference key="1">
    <citation type="journal article" date="1994" name="Appl. Environ. Microbiol.">
        <title>Cloning, expression, and nucleotide sequence of genes involved in production of lactococcin DR, a bacteriocin from Lactococcus lactis subsp. lactis.</title>
        <authorList>
            <person name="Rince A."/>
            <person name="Dufour A."/>
            <person name="le Pogam S."/>
            <person name="Thuault D."/>
            <person name="Bourgeois C.M."/>
            <person name="Pennec J.P."/>
        </authorList>
    </citation>
    <scope>NUCLEOTIDE SEQUENCE [GENOMIC DNA]</scope>
    <source>
        <strain>ADRIA 85LO30</strain>
    </source>
</reference>
<accession>P37609</accession>
<name>LCN2_LACLL</name>
<proteinExistence type="predicted"/>